<sequence>MMNLTDIIDNCLENDTGDHRALDSETAQFIRITLMNDTLVNSIHPSVYDAIIVTKYPVELHKKMTGAVFIDKKNRFKDGQNIISSVIKSITKLRHEIYRVETAKSAYLVIMK</sequence>
<accession>P32287</accession>
<organismHost>
    <name type="scientific">Escherichia coli</name>
    <dbReference type="NCBI Taxonomy" id="562"/>
</organismHost>
<dbReference type="EMBL" id="J05172">
    <property type="status" value="NOT_ANNOTATED_CDS"/>
    <property type="molecule type" value="Genomic_DNA"/>
</dbReference>
<dbReference type="EMBL" id="AF158101">
    <property type="protein sequence ID" value="AAD42547.1"/>
    <property type="molecule type" value="Genomic_DNA"/>
</dbReference>
<dbReference type="RefSeq" id="NP_049829.1">
    <property type="nucleotide sequence ID" value="NC_000866.4"/>
</dbReference>
<dbReference type="GeneID" id="1258687"/>
<dbReference type="KEGG" id="vg:1258687"/>
<dbReference type="OrthoDB" id="15780at10239"/>
<dbReference type="Proteomes" id="UP000009087">
    <property type="component" value="Segment"/>
</dbReference>
<organism>
    <name type="scientific">Enterobacteria phage T4</name>
    <name type="common">Bacteriophage T4</name>
    <dbReference type="NCBI Taxonomy" id="10665"/>
    <lineage>
        <taxon>Viruses</taxon>
        <taxon>Duplodnaviria</taxon>
        <taxon>Heunggongvirae</taxon>
        <taxon>Uroviricota</taxon>
        <taxon>Caudoviricetes</taxon>
        <taxon>Straboviridae</taxon>
        <taxon>Tevenvirinae</taxon>
        <taxon>Tequatrovirus</taxon>
    </lineage>
</organism>
<gene>
    <name type="primary">y13D</name>
    <name type="synonym">cd.1</name>
</gene>
<feature type="chain" id="PRO_0000165177" description="Uncharacterized 12.8 kDa protein in cd-pseT intergenic region">
    <location>
        <begin position="1"/>
        <end position="112"/>
    </location>
</feature>
<protein>
    <recommendedName>
        <fullName>Uncharacterized 12.8 kDa protein in cd-pseT intergenic region</fullName>
    </recommendedName>
</protein>
<reference key="1">
    <citation type="journal article" date="1990" name="J. Biol. Chem.">
        <title>Cloning, sequence analysis, and expression of the bacteriophage T4 cd gene.</title>
        <authorList>
            <person name="Maley G.F."/>
            <person name="Duceman B.W."/>
            <person name="Wang A.-M."/>
            <person name="Martinez J."/>
            <person name="Maley F."/>
        </authorList>
    </citation>
    <scope>NUCLEOTIDE SEQUENCE [GENOMIC DNA]</scope>
</reference>
<reference key="2">
    <citation type="journal article" date="2003" name="Microbiol. Mol. Biol. Rev.">
        <title>Bacteriophage T4 genome.</title>
        <authorList>
            <person name="Miller E.S."/>
            <person name="Kutter E."/>
            <person name="Mosig G."/>
            <person name="Arisaka F."/>
            <person name="Kunisawa T."/>
            <person name="Ruger W."/>
        </authorList>
    </citation>
    <scope>NUCLEOTIDE SEQUENCE [LARGE SCALE GENOMIC DNA]</scope>
</reference>
<keyword id="KW-1185">Reference proteome</keyword>
<name>Y13D_BPT4</name>
<proteinExistence type="predicted"/>